<evidence type="ECO:0000250" key="1">
    <source>
        <dbReference type="UniProtKB" id="O74213"/>
    </source>
</evidence>
<evidence type="ECO:0000255" key="2"/>
<evidence type="ECO:0000255" key="3">
    <source>
        <dbReference type="PROSITE-ProRule" id="PRU10052"/>
    </source>
</evidence>
<evidence type="ECO:0000305" key="4"/>
<reference key="1">
    <citation type="submission" date="1998-02" db="EMBL/GenBank/DDBJ databases">
        <title>Cloning and analysis of a gene encoding polygalacturonase in Penicillium expansum.</title>
        <authorList>
            <person name="Yao C."/>
            <person name="Conway W.S."/>
            <person name="Ren R."/>
            <person name="Sams C.E."/>
        </authorList>
    </citation>
    <scope>NUCLEOTIDE SEQUENCE [GENOMIC DNA]</scope>
</reference>
<feature type="signal peptide" evidence="2">
    <location>
        <begin position="1"/>
        <end position="20"/>
    </location>
</feature>
<feature type="chain" id="PRO_0000024788" description="Polygalacturonase">
    <location>
        <begin position="21"/>
        <end position="378"/>
    </location>
</feature>
<feature type="repeat" description="PbH1 1" evidence="2">
    <location>
        <begin position="172"/>
        <end position="203"/>
    </location>
</feature>
<feature type="repeat" description="PbH1 2" evidence="2">
    <location>
        <begin position="204"/>
        <end position="225"/>
    </location>
</feature>
<feature type="repeat" description="PbH1 3" evidence="2">
    <location>
        <begin position="226"/>
        <end position="246"/>
    </location>
</feature>
<feature type="repeat" description="PbH1 4" evidence="2">
    <location>
        <begin position="255"/>
        <end position="276"/>
    </location>
</feature>
<feature type="repeat" description="PbH1 5" evidence="2">
    <location>
        <begin position="284"/>
        <end position="306"/>
    </location>
</feature>
<feature type="active site" description="Proton donor" evidence="1">
    <location>
        <position position="218"/>
    </location>
</feature>
<feature type="active site" evidence="3">
    <location>
        <position position="240"/>
    </location>
</feature>
<feature type="disulfide bond" evidence="1">
    <location>
        <begin position="39"/>
        <end position="57"/>
    </location>
</feature>
<feature type="disulfide bond" evidence="1">
    <location>
        <begin position="220"/>
        <end position="236"/>
    </location>
</feature>
<feature type="disulfide bond" evidence="1">
    <location>
        <begin position="346"/>
        <end position="352"/>
    </location>
</feature>
<feature type="disulfide bond" evidence="1">
    <location>
        <begin position="370"/>
        <end position="378"/>
    </location>
</feature>
<gene>
    <name type="primary">PEPG1</name>
</gene>
<protein>
    <recommendedName>
        <fullName>Polygalacturonase</fullName>
        <shortName>PG</shortName>
        <ecNumber>3.2.1.15</ecNumber>
    </recommendedName>
    <alternativeName>
        <fullName>Pectinase</fullName>
    </alternativeName>
</protein>
<comment type="catalytic activity">
    <reaction>
        <text>(1,4-alpha-D-galacturonosyl)n+m + H2O = (1,4-alpha-D-galacturonosyl)n + (1,4-alpha-D-galacturonosyl)m.</text>
        <dbReference type="EC" id="3.2.1.15"/>
    </reaction>
</comment>
<comment type="subcellular location">
    <subcellularLocation>
        <location evidence="4">Secreted</location>
    </subcellularLocation>
</comment>
<comment type="similarity">
    <text evidence="4">Belongs to the glycosyl hydrolase 28 family.</text>
</comment>
<sequence>MILTRSVVLGFLGSASLALASPVAELAEGSRLTPRGSACSYSGTSGAAAAIAGKAGCSSITLNNVVVPAGTTLDLTGLASGTKVIFEGTTTFGYKQWAGPLISISGTNIQVSGASGHLIDGQGSRWWDGEGSNSKTNIKPKFFFAHSLKGSSTITGLNIKDSPVQVFSISGSSGLTISGVTIDNKNGDTNSLGHNTDGFDIGDSDSITITGATVYNQDDCLAINSGTNIVFSGGYCSGGHGLSIGSVGGRSNNVVETVHISSTQVVNSQNGVRVKAVSGATGTIKGVTFQDITLSGITSQGITIRQEYTNSGYTGSPTTGVPITGLTLNNVHGTVTSKGTDITIECGSSASCSGWTWTKVAVSGGKADVCKNAPSGTC</sequence>
<proteinExistence type="inferred from homology"/>
<name>PGLR_PENEN</name>
<accession>O59925</accession>
<keyword id="KW-0961">Cell wall biogenesis/degradation</keyword>
<keyword id="KW-1015">Disulfide bond</keyword>
<keyword id="KW-0326">Glycosidase</keyword>
<keyword id="KW-0378">Hydrolase</keyword>
<keyword id="KW-0677">Repeat</keyword>
<keyword id="KW-0964">Secreted</keyword>
<keyword id="KW-0732">Signal</keyword>
<dbReference type="EC" id="3.2.1.15"/>
<dbReference type="EMBL" id="AF047713">
    <property type="protein sequence ID" value="AAC05492.1"/>
    <property type="molecule type" value="Genomic_DNA"/>
</dbReference>
<dbReference type="SMR" id="O59925"/>
<dbReference type="CAZy" id="GH28">
    <property type="family name" value="Glycoside Hydrolase Family 28"/>
</dbReference>
<dbReference type="VEuPathDB" id="FungiDB:PEXP_042190"/>
<dbReference type="BRENDA" id="3.2.1.15">
    <property type="organism ID" value="4613"/>
</dbReference>
<dbReference type="GO" id="GO:0005576">
    <property type="term" value="C:extracellular region"/>
    <property type="evidence" value="ECO:0007669"/>
    <property type="project" value="UniProtKB-SubCell"/>
</dbReference>
<dbReference type="GO" id="GO:0004650">
    <property type="term" value="F:polygalacturonase activity"/>
    <property type="evidence" value="ECO:0007669"/>
    <property type="project" value="UniProtKB-EC"/>
</dbReference>
<dbReference type="GO" id="GO:0071555">
    <property type="term" value="P:cell wall organization"/>
    <property type="evidence" value="ECO:0007669"/>
    <property type="project" value="UniProtKB-KW"/>
</dbReference>
<dbReference type="GO" id="GO:0045490">
    <property type="term" value="P:pectin catabolic process"/>
    <property type="evidence" value="ECO:0007669"/>
    <property type="project" value="TreeGrafter"/>
</dbReference>
<dbReference type="FunFam" id="2.160.20.10:FF:000002">
    <property type="entry name" value="Endopolygalacturonase D"/>
    <property type="match status" value="1"/>
</dbReference>
<dbReference type="Gene3D" id="2.160.20.10">
    <property type="entry name" value="Single-stranded right-handed beta-helix, Pectin lyase-like"/>
    <property type="match status" value="1"/>
</dbReference>
<dbReference type="InterPro" id="IPR000743">
    <property type="entry name" value="Glyco_hydro_28"/>
</dbReference>
<dbReference type="InterPro" id="IPR050434">
    <property type="entry name" value="Glycosyl_hydrlase_28"/>
</dbReference>
<dbReference type="InterPro" id="IPR006626">
    <property type="entry name" value="PbH1"/>
</dbReference>
<dbReference type="InterPro" id="IPR012334">
    <property type="entry name" value="Pectin_lyas_fold"/>
</dbReference>
<dbReference type="InterPro" id="IPR011050">
    <property type="entry name" value="Pectin_lyase_fold/virulence"/>
</dbReference>
<dbReference type="PANTHER" id="PTHR31884">
    <property type="entry name" value="POLYGALACTURONASE"/>
    <property type="match status" value="1"/>
</dbReference>
<dbReference type="PANTHER" id="PTHR31884:SF1">
    <property type="entry name" value="POLYGALACTURONASE"/>
    <property type="match status" value="1"/>
</dbReference>
<dbReference type="Pfam" id="PF00295">
    <property type="entry name" value="Glyco_hydro_28"/>
    <property type="match status" value="1"/>
</dbReference>
<dbReference type="SMART" id="SM00710">
    <property type="entry name" value="PbH1"/>
    <property type="match status" value="5"/>
</dbReference>
<dbReference type="SUPFAM" id="SSF51126">
    <property type="entry name" value="Pectin lyase-like"/>
    <property type="match status" value="1"/>
</dbReference>
<dbReference type="PROSITE" id="PS00502">
    <property type="entry name" value="POLYGALACTURONASE"/>
    <property type="match status" value="1"/>
</dbReference>
<organism>
    <name type="scientific">Penicillium expansum</name>
    <name type="common">Blue mold rot fungus</name>
    <dbReference type="NCBI Taxonomy" id="27334"/>
    <lineage>
        <taxon>Eukaryota</taxon>
        <taxon>Fungi</taxon>
        <taxon>Dikarya</taxon>
        <taxon>Ascomycota</taxon>
        <taxon>Pezizomycotina</taxon>
        <taxon>Eurotiomycetes</taxon>
        <taxon>Eurotiomycetidae</taxon>
        <taxon>Eurotiales</taxon>
        <taxon>Aspergillaceae</taxon>
        <taxon>Penicillium</taxon>
    </lineage>
</organism>